<keyword id="KW-0002">3D-structure</keyword>
<keyword id="KW-0348">Hemagglutinin</keyword>
<keyword id="KW-0378">Hydrolase</keyword>
<keyword id="KW-0645">Protease</keyword>
<keyword id="KW-1185">Reference proteome</keyword>
<keyword id="KW-0677">Repeat</keyword>
<keyword id="KW-0732">Signal</keyword>
<keyword id="KW-0788">Thiol protease</keyword>
<keyword id="KW-0843">Virulence</keyword>
<reference key="1">
    <citation type="journal article" date="2003" name="J. Bacteriol.">
        <title>Complete genome sequence of the oral pathogenic bacterium Porphyromonas gingivalis strain W83.</title>
        <authorList>
            <person name="Nelson K.E."/>
            <person name="Fleischmann R.D."/>
            <person name="DeBoy R.T."/>
            <person name="Paulsen I.T."/>
            <person name="Fouts D.E."/>
            <person name="Eisen J.A."/>
            <person name="Daugherty S.C."/>
            <person name="Dodson R.J."/>
            <person name="Durkin A.S."/>
            <person name="Gwinn M.L."/>
            <person name="Haft D.H."/>
            <person name="Kolonay J.F."/>
            <person name="Nelson W.C."/>
            <person name="Mason T.M."/>
            <person name="Tallon L."/>
            <person name="Gray J."/>
            <person name="Granger D."/>
            <person name="Tettelin H."/>
            <person name="Dong H."/>
            <person name="Galvin J.L."/>
            <person name="Duncan M.J."/>
            <person name="Dewhirst F.E."/>
            <person name="Fraser C.M."/>
        </authorList>
    </citation>
    <scope>NUCLEOTIDE SEQUENCE [LARGE SCALE GENOMIC DNA]</scope>
    <source>
        <strain>ATCC BAA-308 / W83</strain>
    </source>
</reference>
<dbReference type="EMBL" id="AE015924">
    <property type="protein sequence ID" value="AAQ66831.1"/>
    <property type="status" value="ALT_INIT"/>
    <property type="molecule type" value="Genomic_DNA"/>
</dbReference>
<dbReference type="RefSeq" id="WP_043876452.1">
    <property type="nucleotide sequence ID" value="NC_002950.2"/>
</dbReference>
<dbReference type="PDB" id="3KM5">
    <property type="method" value="X-ray"/>
    <property type="resolution" value="1.40 A"/>
    <property type="chains" value="A/B=1137-1314"/>
</dbReference>
<dbReference type="PDBsum" id="3KM5"/>
<dbReference type="SMR" id="P59915"/>
<dbReference type="STRING" id="242619.PG_1837"/>
<dbReference type="EnsemblBacteria" id="AAQ66831">
    <property type="protein sequence ID" value="AAQ66831"/>
    <property type="gene ID" value="PG_1837"/>
</dbReference>
<dbReference type="KEGG" id="pgi:PG_1837"/>
<dbReference type="PATRIC" id="fig|242619.8.peg.1698"/>
<dbReference type="eggNOG" id="COG1974">
    <property type="taxonomic scope" value="Bacteria"/>
</dbReference>
<dbReference type="HOGENOM" id="CLU_232326_0_0_10"/>
<dbReference type="BioCyc" id="PGIN242619:G1G02-1715-MONOMER"/>
<dbReference type="EvolutionaryTrace" id="P59915"/>
<dbReference type="Proteomes" id="UP000000588">
    <property type="component" value="Chromosome"/>
</dbReference>
<dbReference type="GO" id="GO:0008234">
    <property type="term" value="F:cysteine-type peptidase activity"/>
    <property type="evidence" value="ECO:0007669"/>
    <property type="project" value="UniProtKB-KW"/>
</dbReference>
<dbReference type="GO" id="GO:0006508">
    <property type="term" value="P:proteolysis"/>
    <property type="evidence" value="ECO:0007669"/>
    <property type="project" value="UniProtKB-KW"/>
</dbReference>
<dbReference type="FunFam" id="2.60.120.200:FF:000195">
    <property type="entry name" value="Lys-gingipain W83"/>
    <property type="match status" value="4"/>
</dbReference>
<dbReference type="Gene3D" id="2.60.120.200">
    <property type="match status" value="8"/>
</dbReference>
<dbReference type="Gene3D" id="2.60.40.10">
    <property type="entry name" value="Immunoglobulins"/>
    <property type="match status" value="4"/>
</dbReference>
<dbReference type="InterPro" id="IPR011628">
    <property type="entry name" value="Cleaved_adhesin"/>
</dbReference>
<dbReference type="InterPro" id="IPR003961">
    <property type="entry name" value="FN3_dom"/>
</dbReference>
<dbReference type="InterPro" id="IPR013783">
    <property type="entry name" value="Ig-like_fold"/>
</dbReference>
<dbReference type="InterPro" id="IPR018832">
    <property type="entry name" value="Pept_C25_gingipain_C"/>
</dbReference>
<dbReference type="NCBIfam" id="NF038128">
    <property type="entry name" value="choice_anch_J"/>
    <property type="match status" value="8"/>
</dbReference>
<dbReference type="Pfam" id="PF07675">
    <property type="entry name" value="Cleaved_Adhesin"/>
    <property type="match status" value="8"/>
</dbReference>
<dbReference type="Pfam" id="PF10365">
    <property type="entry name" value="DUF2436"/>
    <property type="match status" value="1"/>
</dbReference>
<dbReference type="SMART" id="SM00060">
    <property type="entry name" value="FN3"/>
    <property type="match status" value="5"/>
</dbReference>
<evidence type="ECO:0000250" key="1"/>
<evidence type="ECO:0000255" key="2"/>
<evidence type="ECO:0000256" key="3">
    <source>
        <dbReference type="SAM" id="MobiDB-lite"/>
    </source>
</evidence>
<evidence type="ECO:0000305" key="4"/>
<evidence type="ECO:0007829" key="5">
    <source>
        <dbReference type="PDB" id="3KM5"/>
    </source>
</evidence>
<accession>P59915</accession>
<feature type="signal peptide" evidence="2">
    <location>
        <begin position="1"/>
        <end position="25"/>
    </location>
</feature>
<feature type="chain" id="PRO_0000026537" description="Hemagglutinin A">
    <location>
        <begin position="26"/>
        <end position="2164"/>
    </location>
</feature>
<feature type="region of interest" description="Peptidase C25-like 1">
    <location>
        <begin position="26"/>
        <end position="539"/>
    </location>
</feature>
<feature type="region of interest" description="Disordered" evidence="3">
    <location>
        <begin position="493"/>
        <end position="512"/>
    </location>
</feature>
<feature type="region of interest" description="Disordered" evidence="3">
    <location>
        <begin position="520"/>
        <end position="541"/>
    </location>
</feature>
<feature type="region of interest" description="Peptidase C25-like 2">
    <location>
        <begin position="540"/>
        <end position="991"/>
    </location>
</feature>
<feature type="region of interest" description="Peptidase C25-like 3">
    <location>
        <begin position="992"/>
        <end position="1443"/>
    </location>
</feature>
<feature type="compositionally biased region" description="Low complexity" evidence="3">
    <location>
        <begin position="496"/>
        <end position="508"/>
    </location>
</feature>
<feature type="strand" evidence="5">
    <location>
        <begin position="1139"/>
        <end position="1141"/>
    </location>
</feature>
<feature type="strand" evidence="5">
    <location>
        <begin position="1156"/>
        <end position="1159"/>
    </location>
</feature>
<feature type="strand" evidence="5">
    <location>
        <begin position="1168"/>
        <end position="1171"/>
    </location>
</feature>
<feature type="turn" evidence="5">
    <location>
        <begin position="1172"/>
        <end position="1174"/>
    </location>
</feature>
<feature type="strand" evidence="5">
    <location>
        <begin position="1181"/>
        <end position="1196"/>
    </location>
</feature>
<feature type="strand" evidence="5">
    <location>
        <begin position="1200"/>
        <end position="1204"/>
    </location>
</feature>
<feature type="strand" evidence="5">
    <location>
        <begin position="1213"/>
        <end position="1220"/>
    </location>
</feature>
<feature type="strand" evidence="5">
    <location>
        <begin position="1229"/>
        <end position="1236"/>
    </location>
</feature>
<feature type="helix" evidence="5">
    <location>
        <begin position="1240"/>
        <end position="1242"/>
    </location>
</feature>
<feature type="strand" evidence="5">
    <location>
        <begin position="1243"/>
        <end position="1249"/>
    </location>
</feature>
<feature type="strand" evidence="5">
    <location>
        <begin position="1263"/>
        <end position="1265"/>
    </location>
</feature>
<feature type="strand" evidence="5">
    <location>
        <begin position="1277"/>
        <end position="1282"/>
    </location>
</feature>
<feature type="strand" evidence="5">
    <location>
        <begin position="1289"/>
        <end position="1296"/>
    </location>
</feature>
<feature type="strand" evidence="5">
    <location>
        <begin position="1302"/>
        <end position="1311"/>
    </location>
</feature>
<sequence length="2164" mass="233389">MRKLNSLFSLAVLLSLLCWGQTAAAQGGPKTAPSVTHQAVQKGIRTSKAKDLRDPIPAGMARIILEAHDVWEDGTGYQMLWDADHNQYGASIPEESFWFANGTIPAGLYDPFEYKVPVNADASFSPTNFVLDGTASADIPAGTYDYVIINPNPGIIYIVGEGVSKGNDYVVEAGKTYHFTVQRQGPGDAASVVVTGEGGNEFAPVQNLQWSVSGQTVTLTWQAPASDKRTYVLNESFDTQTLPNGWTMIDADGDGHNWLSTINVYNTATHTGDGAMFSKSWTASSGAKIDLSPDNYLVTPKFTVPENGKLSYWVSSQEPWTNEHYGVFLSTTGNEAANFTIKLLEETLGSGKPAPMNLVKSEGVKAPAPYQERTIDLSAYAGQQVYLAFRHFGCTGIFRLYLDDVAVSGEGSSNDYTYTVYRDNVVIAQNLTATTFNQENVAPGQYNYCVEVKYTAGVSPKVCKDVTVEGSNEFAPVQNLTGSAVGQKVTLKWDAPNGTPNPNPGTTTLSESFENGIPASWKTIDADGDGNNWTTTPPPGGSSFAGHNSAICVSSASYINFEGPQNPDNYLVTPELSLPNGGTLTFWVCAQDANYASEHYAVYASSTGNDASNFANALLEEVLTAKTVVTAPEAIRGTRVQGTWYQKTVQLPAGTKYVAFRHFGCTDFFWINLDDVEIKANGKRADFTETFESSTHGEAPAEWTTIDADGDGQGWLCLSSGQLGWLTAHGGTNVVASFSWNGMALNPDNYLISKDVTGATKVKYYYAVNDGFPGDHYAVMISKTGTNAGDFTVVFEETPNGINKGGARFGLSTEANGAKPQSVWIERTVDLPAGTKYVAFRHYNCSDLNYILLDDIQFTMGGSPTPTDYTYTVYRDGTKIKEGLTETTFEEDGVATGNHEYCVEVKYTAGVSPKECVNVTVDPVQFNPVQNLTGSAVGQKVTLKWDAPNGTPNPNPGTTTLSESFENGIPASWKTIDADGDGNNWTTTPPPGGTSFAGHNSAICVSSASYINFEGPQNPDNYLVTPELSLPNGGTLTFWVCAQDANYASEHYAVYASSTGNDASNFANALLEEVLTAKTVVTAPEAIRGTRVQGTWYQKTVQLPAGTKYVAFRHFGCTDFFWINLDDVEIKANGKRADFTETFESSTHGEAPAEWTTIDADGDGQGWLCLSSGQLDWLTAHGGTNVVASFSWNGMALNPDNYLISKDVTGATKVKYYYAVNDGFPGDHYAVMISKTGTNAGDFTVVFEETPNGINKGGARFGLSTEANGAKPQSVWIERTVDLPAGTKYVAFRHYNCSDLNYILLDDIQFTMGGSPTPTDYTYTVYRDGTKIKEGLTETTFEEDGVATGNHEYCVEVKYTAGVSPKECVNVTVDPVQFNPVQNLTGSAVGQKVTLKWDAPNGTPNPNPGTTTLSESFENGIPASWKTIDADGDGNNWTTTPPPGGTSFAGHNSAICVSSASYINFEGPQNPDNYLVTPELSLPNGGTLTFWVCAQDANYASEHYAVYASSTGNDASNFANALLEEVLTAKTVVTAPEAIRGTRVQGTWYQKTVQLPAGTKYVAFRHFGCTDFFWINLDDVEIKANGKRADFTETFESSTHGEAPAEWTTIDADGDGQGWLCLSSGQLGWLTAHGGTNVVASFSWNGMALNPDNYLISKDVTGATKVKYYYAVNDGFPGDHYAVMISKTGTNAGDFTVVFEETPNGINKGGARFGLSTEANGAKPQSVWIERTVDLPAGTKYVAFRHYNCSDLNYILLDDIQFTMGGSPTPTDYTYTVYRDGTKIKEGLTETTFEEDGVATGNHEYCVEVKYTAGVSPKECVNVTINPTQFNPVQNLTAEQAPNSMDAILKWNAPASKRAEVLNEDFENGIPASWKTIDADGDGNNWTTTPPPGGSSFAGHNSAICVSSASYINFEGPQNPDNYLVTPELSLPGGGTLTFWVCAQDANYASEHYAVYASSTGNDASNFANALLEEVLTAKTVVTAPEAIRGTRVQGTWYQKTVQLPAGTKYVAFRHFGCTDFFWINLDDVVITSGNAPSYTYTIYRNNTQIASGVTETTYRDPDLATGFYTYGVKVVYPNGESAIETATLNITSLADVTAQKPYTLTVVGKTITVTCQGEAMIYDMNGRRLAAGRNTVVYTAQGGHYAVMVVVDGKSYVEKLAVK</sequence>
<name>HAGA1_PORGI</name>
<organism>
    <name type="scientific">Porphyromonas gingivalis (strain ATCC BAA-308 / W83)</name>
    <dbReference type="NCBI Taxonomy" id="242619"/>
    <lineage>
        <taxon>Bacteria</taxon>
        <taxon>Pseudomonadati</taxon>
        <taxon>Bacteroidota</taxon>
        <taxon>Bacteroidia</taxon>
        <taxon>Bacteroidales</taxon>
        <taxon>Porphyromonadaceae</taxon>
        <taxon>Porphyromonas</taxon>
    </lineage>
</organism>
<gene>
    <name type="primary">hagA</name>
    <name type="ordered locus">PG_1837</name>
</gene>
<comment type="function">
    <text evidence="1">Agglutinates erythrocytes.</text>
</comment>
<comment type="similarity">
    <text evidence="4">Belongs to the peptidase C25 family.</text>
</comment>
<comment type="sequence caution" evidence="4">
    <conflict type="erroneous initiation">
        <sequence resource="EMBL-CDS" id="AAQ66831"/>
    </conflict>
</comment>
<protein>
    <recommendedName>
        <fullName>Hemagglutinin A</fullName>
    </recommendedName>
</protein>
<proteinExistence type="evidence at protein level"/>